<sequence length="388" mass="41257">MNIHEYQGKEILRKYNVPVPRGIPAFSVDEALKAAEQLGGPVWVVKAQIHAGGRGKGGGVKVAKSMDEVKTYASNILGMQLVTHQTGPEGKKVNRLLIEEGADIKKELYVSLVVDRVSQKIALMASSEGGMDIEEVAAHTPEKIHTLIIEPSTGLTDADADDIARKIGVPDASVAQARQALQGLYKAFYETDASLAEINPLILTGDGKVIALDAKFNFDSNALFRHPEIVAYRDLDEEDANEIEASKFDLAYISLDGNIGCLVNGAGLAMATMDTIKLFGGEPANFLDVGGGATTEKVTEAFKLMLKNPNVQAILVNIFGGIMRCDVIAEGVISASKAVSLNVPLVVRMKGTNEELGRKMLADSGLPIISADTMEEAAQKVVAAAAGK</sequence>
<keyword id="KW-0067">ATP-binding</keyword>
<keyword id="KW-0436">Ligase</keyword>
<keyword id="KW-0460">Magnesium</keyword>
<keyword id="KW-0479">Metal-binding</keyword>
<keyword id="KW-0547">Nucleotide-binding</keyword>
<keyword id="KW-0816">Tricarboxylic acid cycle</keyword>
<organism>
    <name type="scientific">Cupriavidus taiwanensis (strain DSM 17343 / BCRC 17206 / CCUG 44338 / CIP 107171 / LMG 19424 / R1)</name>
    <name type="common">Ralstonia taiwanensis (strain LMG 19424)</name>
    <dbReference type="NCBI Taxonomy" id="977880"/>
    <lineage>
        <taxon>Bacteria</taxon>
        <taxon>Pseudomonadati</taxon>
        <taxon>Pseudomonadota</taxon>
        <taxon>Betaproteobacteria</taxon>
        <taxon>Burkholderiales</taxon>
        <taxon>Burkholderiaceae</taxon>
        <taxon>Cupriavidus</taxon>
    </lineage>
</organism>
<gene>
    <name evidence="1" type="primary">sucC</name>
    <name type="ordered locus">RALTA_A0502</name>
</gene>
<dbReference type="EC" id="6.2.1.5" evidence="1"/>
<dbReference type="EMBL" id="CU633749">
    <property type="protein sequence ID" value="CAP63170.1"/>
    <property type="molecule type" value="Genomic_DNA"/>
</dbReference>
<dbReference type="RefSeq" id="WP_012351830.1">
    <property type="nucleotide sequence ID" value="NC_010528.1"/>
</dbReference>
<dbReference type="SMR" id="B2AHC1"/>
<dbReference type="GeneID" id="29763254"/>
<dbReference type="KEGG" id="cti:RALTA_A0502"/>
<dbReference type="eggNOG" id="COG0045">
    <property type="taxonomic scope" value="Bacteria"/>
</dbReference>
<dbReference type="HOGENOM" id="CLU_037430_0_2_4"/>
<dbReference type="BioCyc" id="CTAI977880:RALTA_RS02460-MONOMER"/>
<dbReference type="UniPathway" id="UPA00223">
    <property type="reaction ID" value="UER00999"/>
</dbReference>
<dbReference type="Proteomes" id="UP000001692">
    <property type="component" value="Chromosome 1"/>
</dbReference>
<dbReference type="GO" id="GO:0005829">
    <property type="term" value="C:cytosol"/>
    <property type="evidence" value="ECO:0007669"/>
    <property type="project" value="TreeGrafter"/>
</dbReference>
<dbReference type="GO" id="GO:0042709">
    <property type="term" value="C:succinate-CoA ligase complex"/>
    <property type="evidence" value="ECO:0007669"/>
    <property type="project" value="TreeGrafter"/>
</dbReference>
<dbReference type="GO" id="GO:0005524">
    <property type="term" value="F:ATP binding"/>
    <property type="evidence" value="ECO:0007669"/>
    <property type="project" value="UniProtKB-UniRule"/>
</dbReference>
<dbReference type="GO" id="GO:0000287">
    <property type="term" value="F:magnesium ion binding"/>
    <property type="evidence" value="ECO:0007669"/>
    <property type="project" value="UniProtKB-UniRule"/>
</dbReference>
<dbReference type="GO" id="GO:0004775">
    <property type="term" value="F:succinate-CoA ligase (ADP-forming) activity"/>
    <property type="evidence" value="ECO:0007669"/>
    <property type="project" value="UniProtKB-UniRule"/>
</dbReference>
<dbReference type="GO" id="GO:0004776">
    <property type="term" value="F:succinate-CoA ligase (GDP-forming) activity"/>
    <property type="evidence" value="ECO:0007669"/>
    <property type="project" value="RHEA"/>
</dbReference>
<dbReference type="GO" id="GO:0006104">
    <property type="term" value="P:succinyl-CoA metabolic process"/>
    <property type="evidence" value="ECO:0007669"/>
    <property type="project" value="TreeGrafter"/>
</dbReference>
<dbReference type="GO" id="GO:0006099">
    <property type="term" value="P:tricarboxylic acid cycle"/>
    <property type="evidence" value="ECO:0007669"/>
    <property type="project" value="UniProtKB-UniRule"/>
</dbReference>
<dbReference type="FunFam" id="3.30.1490.20:FF:000002">
    <property type="entry name" value="Succinate--CoA ligase [ADP-forming] subunit beta"/>
    <property type="match status" value="1"/>
</dbReference>
<dbReference type="FunFam" id="3.30.470.20:FF:000002">
    <property type="entry name" value="Succinate--CoA ligase [ADP-forming] subunit beta"/>
    <property type="match status" value="1"/>
</dbReference>
<dbReference type="FunFam" id="3.40.50.261:FF:000001">
    <property type="entry name" value="Succinate--CoA ligase [ADP-forming] subunit beta"/>
    <property type="match status" value="1"/>
</dbReference>
<dbReference type="Gene3D" id="3.30.1490.20">
    <property type="entry name" value="ATP-grasp fold, A domain"/>
    <property type="match status" value="1"/>
</dbReference>
<dbReference type="Gene3D" id="3.30.470.20">
    <property type="entry name" value="ATP-grasp fold, B domain"/>
    <property type="match status" value="1"/>
</dbReference>
<dbReference type="Gene3D" id="3.40.50.261">
    <property type="entry name" value="Succinyl-CoA synthetase domains"/>
    <property type="match status" value="1"/>
</dbReference>
<dbReference type="HAMAP" id="MF_00558">
    <property type="entry name" value="Succ_CoA_beta"/>
    <property type="match status" value="1"/>
</dbReference>
<dbReference type="InterPro" id="IPR011761">
    <property type="entry name" value="ATP-grasp"/>
</dbReference>
<dbReference type="InterPro" id="IPR013650">
    <property type="entry name" value="ATP-grasp_succ-CoA_synth-type"/>
</dbReference>
<dbReference type="InterPro" id="IPR013815">
    <property type="entry name" value="ATP_grasp_subdomain_1"/>
</dbReference>
<dbReference type="InterPro" id="IPR017866">
    <property type="entry name" value="Succ-CoA_synthase_bsu_CS"/>
</dbReference>
<dbReference type="InterPro" id="IPR005811">
    <property type="entry name" value="SUCC_ACL_C"/>
</dbReference>
<dbReference type="InterPro" id="IPR005809">
    <property type="entry name" value="Succ_CoA_ligase-like_bsu"/>
</dbReference>
<dbReference type="InterPro" id="IPR016102">
    <property type="entry name" value="Succinyl-CoA_synth-like"/>
</dbReference>
<dbReference type="NCBIfam" id="NF001913">
    <property type="entry name" value="PRK00696.1"/>
    <property type="match status" value="1"/>
</dbReference>
<dbReference type="NCBIfam" id="TIGR01016">
    <property type="entry name" value="sucCoAbeta"/>
    <property type="match status" value="1"/>
</dbReference>
<dbReference type="PANTHER" id="PTHR11815:SF10">
    <property type="entry name" value="SUCCINATE--COA LIGASE [GDP-FORMING] SUBUNIT BETA, MITOCHONDRIAL"/>
    <property type="match status" value="1"/>
</dbReference>
<dbReference type="PANTHER" id="PTHR11815">
    <property type="entry name" value="SUCCINYL-COA SYNTHETASE BETA CHAIN"/>
    <property type="match status" value="1"/>
</dbReference>
<dbReference type="Pfam" id="PF08442">
    <property type="entry name" value="ATP-grasp_2"/>
    <property type="match status" value="1"/>
</dbReference>
<dbReference type="Pfam" id="PF00549">
    <property type="entry name" value="Ligase_CoA"/>
    <property type="match status" value="1"/>
</dbReference>
<dbReference type="PIRSF" id="PIRSF001554">
    <property type="entry name" value="SucCS_beta"/>
    <property type="match status" value="1"/>
</dbReference>
<dbReference type="SUPFAM" id="SSF56059">
    <property type="entry name" value="Glutathione synthetase ATP-binding domain-like"/>
    <property type="match status" value="1"/>
</dbReference>
<dbReference type="SUPFAM" id="SSF52210">
    <property type="entry name" value="Succinyl-CoA synthetase domains"/>
    <property type="match status" value="1"/>
</dbReference>
<dbReference type="PROSITE" id="PS50975">
    <property type="entry name" value="ATP_GRASP"/>
    <property type="match status" value="1"/>
</dbReference>
<dbReference type="PROSITE" id="PS01217">
    <property type="entry name" value="SUCCINYL_COA_LIG_3"/>
    <property type="match status" value="1"/>
</dbReference>
<accession>B2AHC1</accession>
<name>SUCC_CUPTR</name>
<evidence type="ECO:0000255" key="1">
    <source>
        <dbReference type="HAMAP-Rule" id="MF_00558"/>
    </source>
</evidence>
<proteinExistence type="inferred from homology"/>
<reference key="1">
    <citation type="journal article" date="2008" name="Genome Res.">
        <title>Genome sequence of the beta-rhizobium Cupriavidus taiwanensis and comparative genomics of rhizobia.</title>
        <authorList>
            <person name="Amadou C."/>
            <person name="Pascal G."/>
            <person name="Mangenot S."/>
            <person name="Glew M."/>
            <person name="Bontemps C."/>
            <person name="Capela D."/>
            <person name="Carrere S."/>
            <person name="Cruveiller S."/>
            <person name="Dossat C."/>
            <person name="Lajus A."/>
            <person name="Marchetti M."/>
            <person name="Poinsot V."/>
            <person name="Rouy Z."/>
            <person name="Servin B."/>
            <person name="Saad M."/>
            <person name="Schenowitz C."/>
            <person name="Barbe V."/>
            <person name="Batut J."/>
            <person name="Medigue C."/>
            <person name="Masson-Boivin C."/>
        </authorList>
    </citation>
    <scope>NUCLEOTIDE SEQUENCE [LARGE SCALE GENOMIC DNA]</scope>
    <source>
        <strain>DSM 17343 / BCRC 17206 / CCUG 44338 / CIP 107171 / LMG 19424 / R1</strain>
    </source>
</reference>
<feature type="chain" id="PRO_1000129178" description="Succinate--CoA ligase [ADP-forming] subunit beta">
    <location>
        <begin position="1"/>
        <end position="388"/>
    </location>
</feature>
<feature type="domain" description="ATP-grasp" evidence="1">
    <location>
        <begin position="9"/>
        <end position="244"/>
    </location>
</feature>
<feature type="binding site" evidence="1">
    <location>
        <position position="46"/>
    </location>
    <ligand>
        <name>ATP</name>
        <dbReference type="ChEBI" id="CHEBI:30616"/>
    </ligand>
</feature>
<feature type="binding site" evidence="1">
    <location>
        <begin position="53"/>
        <end position="55"/>
    </location>
    <ligand>
        <name>ATP</name>
        <dbReference type="ChEBI" id="CHEBI:30616"/>
    </ligand>
</feature>
<feature type="binding site" evidence="1">
    <location>
        <position position="99"/>
    </location>
    <ligand>
        <name>ATP</name>
        <dbReference type="ChEBI" id="CHEBI:30616"/>
    </ligand>
</feature>
<feature type="binding site" evidence="1">
    <location>
        <position position="102"/>
    </location>
    <ligand>
        <name>ATP</name>
        <dbReference type="ChEBI" id="CHEBI:30616"/>
    </ligand>
</feature>
<feature type="binding site" evidence="1">
    <location>
        <position position="107"/>
    </location>
    <ligand>
        <name>ATP</name>
        <dbReference type="ChEBI" id="CHEBI:30616"/>
    </ligand>
</feature>
<feature type="binding site" evidence="1">
    <location>
        <position position="199"/>
    </location>
    <ligand>
        <name>Mg(2+)</name>
        <dbReference type="ChEBI" id="CHEBI:18420"/>
    </ligand>
</feature>
<feature type="binding site" evidence="1">
    <location>
        <position position="213"/>
    </location>
    <ligand>
        <name>Mg(2+)</name>
        <dbReference type="ChEBI" id="CHEBI:18420"/>
    </ligand>
</feature>
<feature type="binding site" evidence="1">
    <location>
        <position position="264"/>
    </location>
    <ligand>
        <name>substrate</name>
        <note>ligand shared with subunit alpha</note>
    </ligand>
</feature>
<feature type="binding site" evidence="1">
    <location>
        <begin position="321"/>
        <end position="323"/>
    </location>
    <ligand>
        <name>substrate</name>
        <note>ligand shared with subunit alpha</note>
    </ligand>
</feature>
<protein>
    <recommendedName>
        <fullName evidence="1">Succinate--CoA ligase [ADP-forming] subunit beta</fullName>
        <ecNumber evidence="1">6.2.1.5</ecNumber>
    </recommendedName>
    <alternativeName>
        <fullName evidence="1">Succinyl-CoA synthetase subunit beta</fullName>
        <shortName evidence="1">SCS-beta</shortName>
    </alternativeName>
</protein>
<comment type="function">
    <text evidence="1">Succinyl-CoA synthetase functions in the citric acid cycle (TCA), coupling the hydrolysis of succinyl-CoA to the synthesis of either ATP or GTP and thus represents the only step of substrate-level phosphorylation in the TCA. The beta subunit provides nucleotide specificity of the enzyme and binds the substrate succinate, while the binding sites for coenzyme A and phosphate are found in the alpha subunit.</text>
</comment>
<comment type="catalytic activity">
    <reaction evidence="1">
        <text>succinate + ATP + CoA = succinyl-CoA + ADP + phosphate</text>
        <dbReference type="Rhea" id="RHEA:17661"/>
        <dbReference type="ChEBI" id="CHEBI:30031"/>
        <dbReference type="ChEBI" id="CHEBI:30616"/>
        <dbReference type="ChEBI" id="CHEBI:43474"/>
        <dbReference type="ChEBI" id="CHEBI:57287"/>
        <dbReference type="ChEBI" id="CHEBI:57292"/>
        <dbReference type="ChEBI" id="CHEBI:456216"/>
        <dbReference type="EC" id="6.2.1.5"/>
    </reaction>
    <physiologicalReaction direction="right-to-left" evidence="1">
        <dbReference type="Rhea" id="RHEA:17663"/>
    </physiologicalReaction>
</comment>
<comment type="catalytic activity">
    <reaction evidence="1">
        <text>GTP + succinate + CoA = succinyl-CoA + GDP + phosphate</text>
        <dbReference type="Rhea" id="RHEA:22120"/>
        <dbReference type="ChEBI" id="CHEBI:30031"/>
        <dbReference type="ChEBI" id="CHEBI:37565"/>
        <dbReference type="ChEBI" id="CHEBI:43474"/>
        <dbReference type="ChEBI" id="CHEBI:57287"/>
        <dbReference type="ChEBI" id="CHEBI:57292"/>
        <dbReference type="ChEBI" id="CHEBI:58189"/>
    </reaction>
    <physiologicalReaction direction="right-to-left" evidence="1">
        <dbReference type="Rhea" id="RHEA:22122"/>
    </physiologicalReaction>
</comment>
<comment type="cofactor">
    <cofactor evidence="1">
        <name>Mg(2+)</name>
        <dbReference type="ChEBI" id="CHEBI:18420"/>
    </cofactor>
    <text evidence="1">Binds 1 Mg(2+) ion per subunit.</text>
</comment>
<comment type="pathway">
    <text evidence="1">Carbohydrate metabolism; tricarboxylic acid cycle; succinate from succinyl-CoA (ligase route): step 1/1.</text>
</comment>
<comment type="subunit">
    <text evidence="1">Heterotetramer of two alpha and two beta subunits.</text>
</comment>
<comment type="similarity">
    <text evidence="1">Belongs to the succinate/malate CoA ligase beta subunit family.</text>
</comment>